<sequence>MEKPYNKNEGNLENEGKPEDEVEPDDEGKSDEEEKPDVEGKTECEGKREDEGEPGDEGQLEDEGSQEKQGRSEGEGKPQGEGKPASQAKPESQPRAAEKRPAEDYVPRKAKRKTDRGTDDSPKDSQEDLQERHLSSEEMMRECGDVSRAQEELRKKQKMGGFHWMQRDVQDPFAPRGQRGVRGVRGGGRGQRGLHDIPYL</sequence>
<evidence type="ECO:0000256" key="1">
    <source>
        <dbReference type="SAM" id="MobiDB-lite"/>
    </source>
</evidence>
<evidence type="ECO:0000305" key="2"/>
<evidence type="ECO:0007744" key="3">
    <source>
    </source>
</evidence>
<evidence type="ECO:0007744" key="4">
    <source>
    </source>
</evidence>
<evidence type="ECO:0007744" key="5">
    <source>
    </source>
</evidence>
<protein>
    <recommendedName>
        <fullName>Transcription elongation factor A protein-like 3</fullName>
        <shortName>TCEA-like protein 3</shortName>
    </recommendedName>
    <alternativeName>
        <fullName>Transcription elongation factor S-II protein-like 3</fullName>
    </alternativeName>
</protein>
<comment type="function">
    <text>May be involved in transcriptional regulation.</text>
</comment>
<comment type="subcellular location">
    <subcellularLocation>
        <location evidence="2">Nucleus</location>
    </subcellularLocation>
</comment>
<comment type="similarity">
    <text evidence="2">Belongs to the TFS-II family. TFA subfamily.</text>
</comment>
<feature type="chain" id="PRO_0000239207" description="Transcription elongation factor A protein-like 3">
    <location>
        <begin position="1"/>
        <end position="200"/>
    </location>
</feature>
<feature type="region of interest" description="Disordered" evidence="1">
    <location>
        <begin position="1"/>
        <end position="200"/>
    </location>
</feature>
<feature type="compositionally biased region" description="Acidic residues" evidence="1">
    <location>
        <begin position="20"/>
        <end position="36"/>
    </location>
</feature>
<feature type="compositionally biased region" description="Basic and acidic residues" evidence="1">
    <location>
        <begin position="37"/>
        <end position="50"/>
    </location>
</feature>
<feature type="compositionally biased region" description="Acidic residues" evidence="1">
    <location>
        <begin position="51"/>
        <end position="64"/>
    </location>
</feature>
<feature type="compositionally biased region" description="Basic and acidic residues" evidence="1">
    <location>
        <begin position="65"/>
        <end position="80"/>
    </location>
</feature>
<feature type="compositionally biased region" description="Basic and acidic residues" evidence="1">
    <location>
        <begin position="96"/>
        <end position="107"/>
    </location>
</feature>
<feature type="compositionally biased region" description="Basic and acidic residues" evidence="1">
    <location>
        <begin position="115"/>
        <end position="154"/>
    </location>
</feature>
<feature type="modified residue" description="Phosphoserine" evidence="3 5">
    <location>
        <position position="30"/>
    </location>
</feature>
<feature type="modified residue" description="Phosphoserine" evidence="3 4">
    <location>
        <position position="65"/>
    </location>
</feature>
<feature type="sequence variant" id="VAR_059829" description="In dbSNP:rs12009847.">
    <original>Q</original>
    <variation>E</variation>
    <location>
        <position position="87"/>
    </location>
</feature>
<organism>
    <name type="scientific">Homo sapiens</name>
    <name type="common">Human</name>
    <dbReference type="NCBI Taxonomy" id="9606"/>
    <lineage>
        <taxon>Eukaryota</taxon>
        <taxon>Metazoa</taxon>
        <taxon>Chordata</taxon>
        <taxon>Craniata</taxon>
        <taxon>Vertebrata</taxon>
        <taxon>Euteleostomi</taxon>
        <taxon>Mammalia</taxon>
        <taxon>Eutheria</taxon>
        <taxon>Euarchontoglires</taxon>
        <taxon>Primates</taxon>
        <taxon>Haplorrhini</taxon>
        <taxon>Catarrhini</taxon>
        <taxon>Hominidae</taxon>
        <taxon>Homo</taxon>
    </lineage>
</organism>
<dbReference type="EMBL" id="AF163263">
    <property type="protein sequence ID" value="AAQ13592.1"/>
    <property type="molecule type" value="mRNA"/>
</dbReference>
<dbReference type="EMBL" id="AK098494">
    <property type="protein sequence ID" value="BAC05318.1"/>
    <property type="molecule type" value="mRNA"/>
</dbReference>
<dbReference type="EMBL" id="Z73965">
    <property type="status" value="NOT_ANNOTATED_CDS"/>
    <property type="molecule type" value="Genomic_DNA"/>
</dbReference>
<dbReference type="EMBL" id="CH471190">
    <property type="protein sequence ID" value="EAW54703.1"/>
    <property type="molecule type" value="Genomic_DNA"/>
</dbReference>
<dbReference type="EMBL" id="CH471190">
    <property type="protein sequence ID" value="EAW54704.1"/>
    <property type="molecule type" value="Genomic_DNA"/>
</dbReference>
<dbReference type="EMBL" id="BC007622">
    <property type="protein sequence ID" value="AAH07622.1"/>
    <property type="molecule type" value="mRNA"/>
</dbReference>
<dbReference type="EMBL" id="BC008703">
    <property type="protein sequence ID" value="AAH08703.1"/>
    <property type="molecule type" value="mRNA"/>
</dbReference>
<dbReference type="CCDS" id="CCDS14511.1"/>
<dbReference type="RefSeq" id="NP_001006934.1">
    <property type="nucleotide sequence ID" value="NM_001006933.2"/>
</dbReference>
<dbReference type="RefSeq" id="NP_116315.1">
    <property type="nucleotide sequence ID" value="NM_032926.3"/>
</dbReference>
<dbReference type="SMR" id="Q969E4"/>
<dbReference type="BioGRID" id="124427">
    <property type="interactions" value="5"/>
</dbReference>
<dbReference type="FunCoup" id="Q969E4">
    <property type="interactions" value="3"/>
</dbReference>
<dbReference type="IntAct" id="Q969E4">
    <property type="interactions" value="2"/>
</dbReference>
<dbReference type="STRING" id="9606.ENSP00000361711"/>
<dbReference type="GlyGen" id="Q969E4">
    <property type="glycosylation" value="1 site, 1 O-linked glycan (1 site)"/>
</dbReference>
<dbReference type="iPTMnet" id="Q969E4"/>
<dbReference type="MetOSite" id="Q969E4"/>
<dbReference type="PhosphoSitePlus" id="Q969E4"/>
<dbReference type="BioMuta" id="TCEAL3"/>
<dbReference type="DMDM" id="74762641"/>
<dbReference type="jPOST" id="Q969E4"/>
<dbReference type="MassIVE" id="Q969E4"/>
<dbReference type="PaxDb" id="9606-ENSP00000361711"/>
<dbReference type="PeptideAtlas" id="Q969E4"/>
<dbReference type="ProteomicsDB" id="75744"/>
<dbReference type="Pumba" id="Q969E4"/>
<dbReference type="Antibodypedia" id="44291">
    <property type="antibodies" value="103 antibodies from 20 providers"/>
</dbReference>
<dbReference type="DNASU" id="85012"/>
<dbReference type="Ensembl" id="ENST00000243286.7">
    <property type="protein sequence ID" value="ENSP00000243286.3"/>
    <property type="gene ID" value="ENSG00000196507.11"/>
</dbReference>
<dbReference type="Ensembl" id="ENST00000372627.10">
    <property type="protein sequence ID" value="ENSP00000361710.5"/>
    <property type="gene ID" value="ENSG00000196507.11"/>
</dbReference>
<dbReference type="Ensembl" id="ENST00000372628.5">
    <property type="protein sequence ID" value="ENSP00000361711.1"/>
    <property type="gene ID" value="ENSG00000196507.11"/>
</dbReference>
<dbReference type="GeneID" id="85012"/>
<dbReference type="KEGG" id="hsa:85012"/>
<dbReference type="MANE-Select" id="ENST00000372627.10">
    <property type="protein sequence ID" value="ENSP00000361710.5"/>
    <property type="RefSeq nucleotide sequence ID" value="NM_032926.3"/>
    <property type="RefSeq protein sequence ID" value="NP_116315.1"/>
</dbReference>
<dbReference type="UCSC" id="uc004ekq.4">
    <property type="organism name" value="human"/>
</dbReference>
<dbReference type="AGR" id="HGNC:28247"/>
<dbReference type="CTD" id="85012"/>
<dbReference type="GeneCards" id="TCEAL3"/>
<dbReference type="HGNC" id="HGNC:28247">
    <property type="gene designation" value="TCEAL3"/>
</dbReference>
<dbReference type="HPA" id="ENSG00000196507">
    <property type="expression patterns" value="Low tissue specificity"/>
</dbReference>
<dbReference type="neXtProt" id="NX_Q969E4"/>
<dbReference type="OpenTargets" id="ENSG00000196507"/>
<dbReference type="PharmGKB" id="PA128394737"/>
<dbReference type="VEuPathDB" id="HostDB:ENSG00000196507"/>
<dbReference type="eggNOG" id="ENOG502RKY0">
    <property type="taxonomic scope" value="Eukaryota"/>
</dbReference>
<dbReference type="GeneTree" id="ENSGT00950000183164"/>
<dbReference type="HOGENOM" id="CLU_078412_1_0_1"/>
<dbReference type="InParanoid" id="Q969E4"/>
<dbReference type="OMA" id="RINNFYW"/>
<dbReference type="OrthoDB" id="9837766at2759"/>
<dbReference type="PAN-GO" id="Q969E4">
    <property type="GO annotations" value="2 GO annotations based on evolutionary models"/>
</dbReference>
<dbReference type="PhylomeDB" id="Q969E4"/>
<dbReference type="TreeFam" id="TF336871"/>
<dbReference type="PathwayCommons" id="Q969E4"/>
<dbReference type="SignaLink" id="Q969E4"/>
<dbReference type="BioGRID-ORCS" id="85012">
    <property type="hits" value="45 hits in 680 CRISPR screens"/>
</dbReference>
<dbReference type="ChiTaRS" id="TCEAL3">
    <property type="organism name" value="human"/>
</dbReference>
<dbReference type="GenomeRNAi" id="85012"/>
<dbReference type="Pharos" id="Q969E4">
    <property type="development level" value="Tdark"/>
</dbReference>
<dbReference type="PRO" id="PR:Q969E4"/>
<dbReference type="Proteomes" id="UP000005640">
    <property type="component" value="Chromosome X"/>
</dbReference>
<dbReference type="RNAct" id="Q969E4">
    <property type="molecule type" value="protein"/>
</dbReference>
<dbReference type="Bgee" id="ENSG00000196507">
    <property type="expression patterns" value="Expressed in medial globus pallidus and 182 other cell types or tissues"/>
</dbReference>
<dbReference type="GO" id="GO:0005634">
    <property type="term" value="C:nucleus"/>
    <property type="evidence" value="ECO:0007669"/>
    <property type="project" value="UniProtKB-SubCell"/>
</dbReference>
<dbReference type="InterPro" id="IPR021156">
    <property type="entry name" value="TF_A-like/BEX"/>
</dbReference>
<dbReference type="Pfam" id="PF04538">
    <property type="entry name" value="BEX"/>
    <property type="match status" value="1"/>
</dbReference>
<proteinExistence type="evidence at protein level"/>
<gene>
    <name type="primary">TCEAL3</name>
    <name type="ORF">MSTP072</name>
</gene>
<name>TCAL3_HUMAN</name>
<accession>Q969E4</accession>
<accession>D3DXA4</accession>
<reference key="1">
    <citation type="submission" date="1999-06" db="EMBL/GenBank/DDBJ databases">
        <authorList>
            <person name="Sheng H."/>
            <person name="Qin B.M."/>
            <person name="Zhang Q."/>
            <person name="Liu Y.Q."/>
            <person name="Xu Y.Y."/>
            <person name="Liu B."/>
            <person name="Zhao B."/>
            <person name="Wang X.Y."/>
            <person name="Ye J."/>
            <person name="Song L."/>
            <person name="Gao Y."/>
            <person name="Zhang C.L."/>
            <person name="Zhang J."/>
            <person name="Chai M.Q."/>
            <person name="Cheng J.Z."/>
            <person name="Sun Y.H."/>
            <person name="Zhou X.L."/>
            <person name="Gao R.L."/>
            <person name="Hui R.T."/>
        </authorList>
    </citation>
    <scope>NUCLEOTIDE SEQUENCE [LARGE SCALE MRNA]</scope>
    <source>
        <tissue>Aorta</tissue>
    </source>
</reference>
<reference key="2">
    <citation type="journal article" date="2004" name="Nat. Genet.">
        <title>Complete sequencing and characterization of 21,243 full-length human cDNAs.</title>
        <authorList>
            <person name="Ota T."/>
            <person name="Suzuki Y."/>
            <person name="Nishikawa T."/>
            <person name="Otsuki T."/>
            <person name="Sugiyama T."/>
            <person name="Irie R."/>
            <person name="Wakamatsu A."/>
            <person name="Hayashi K."/>
            <person name="Sato H."/>
            <person name="Nagai K."/>
            <person name="Kimura K."/>
            <person name="Makita H."/>
            <person name="Sekine M."/>
            <person name="Obayashi M."/>
            <person name="Nishi T."/>
            <person name="Shibahara T."/>
            <person name="Tanaka T."/>
            <person name="Ishii S."/>
            <person name="Yamamoto J."/>
            <person name="Saito K."/>
            <person name="Kawai Y."/>
            <person name="Isono Y."/>
            <person name="Nakamura Y."/>
            <person name="Nagahari K."/>
            <person name="Murakami K."/>
            <person name="Yasuda T."/>
            <person name="Iwayanagi T."/>
            <person name="Wagatsuma M."/>
            <person name="Shiratori A."/>
            <person name="Sudo H."/>
            <person name="Hosoiri T."/>
            <person name="Kaku Y."/>
            <person name="Kodaira H."/>
            <person name="Kondo H."/>
            <person name="Sugawara M."/>
            <person name="Takahashi M."/>
            <person name="Kanda K."/>
            <person name="Yokoi T."/>
            <person name="Furuya T."/>
            <person name="Kikkawa E."/>
            <person name="Omura Y."/>
            <person name="Abe K."/>
            <person name="Kamihara K."/>
            <person name="Katsuta N."/>
            <person name="Sato K."/>
            <person name="Tanikawa M."/>
            <person name="Yamazaki M."/>
            <person name="Ninomiya K."/>
            <person name="Ishibashi T."/>
            <person name="Yamashita H."/>
            <person name="Murakawa K."/>
            <person name="Fujimori K."/>
            <person name="Tanai H."/>
            <person name="Kimata M."/>
            <person name="Watanabe M."/>
            <person name="Hiraoka S."/>
            <person name="Chiba Y."/>
            <person name="Ishida S."/>
            <person name="Ono Y."/>
            <person name="Takiguchi S."/>
            <person name="Watanabe S."/>
            <person name="Yosida M."/>
            <person name="Hotuta T."/>
            <person name="Kusano J."/>
            <person name="Kanehori K."/>
            <person name="Takahashi-Fujii A."/>
            <person name="Hara H."/>
            <person name="Tanase T.-O."/>
            <person name="Nomura Y."/>
            <person name="Togiya S."/>
            <person name="Komai F."/>
            <person name="Hara R."/>
            <person name="Takeuchi K."/>
            <person name="Arita M."/>
            <person name="Imose N."/>
            <person name="Musashino K."/>
            <person name="Yuuki H."/>
            <person name="Oshima A."/>
            <person name="Sasaki N."/>
            <person name="Aotsuka S."/>
            <person name="Yoshikawa Y."/>
            <person name="Matsunawa H."/>
            <person name="Ichihara T."/>
            <person name="Shiohata N."/>
            <person name="Sano S."/>
            <person name="Moriya S."/>
            <person name="Momiyama H."/>
            <person name="Satoh N."/>
            <person name="Takami S."/>
            <person name="Terashima Y."/>
            <person name="Suzuki O."/>
            <person name="Nakagawa S."/>
            <person name="Senoh A."/>
            <person name="Mizoguchi H."/>
            <person name="Goto Y."/>
            <person name="Shimizu F."/>
            <person name="Wakebe H."/>
            <person name="Hishigaki H."/>
            <person name="Watanabe T."/>
            <person name="Sugiyama A."/>
            <person name="Takemoto M."/>
            <person name="Kawakami B."/>
            <person name="Yamazaki M."/>
            <person name="Watanabe K."/>
            <person name="Kumagai A."/>
            <person name="Itakura S."/>
            <person name="Fukuzumi Y."/>
            <person name="Fujimori Y."/>
            <person name="Komiyama M."/>
            <person name="Tashiro H."/>
            <person name="Tanigami A."/>
            <person name="Fujiwara T."/>
            <person name="Ono T."/>
            <person name="Yamada K."/>
            <person name="Fujii Y."/>
            <person name="Ozaki K."/>
            <person name="Hirao M."/>
            <person name="Ohmori Y."/>
            <person name="Kawabata A."/>
            <person name="Hikiji T."/>
            <person name="Kobatake N."/>
            <person name="Inagaki H."/>
            <person name="Ikema Y."/>
            <person name="Okamoto S."/>
            <person name="Okitani R."/>
            <person name="Kawakami T."/>
            <person name="Noguchi S."/>
            <person name="Itoh T."/>
            <person name="Shigeta K."/>
            <person name="Senba T."/>
            <person name="Matsumura K."/>
            <person name="Nakajima Y."/>
            <person name="Mizuno T."/>
            <person name="Morinaga M."/>
            <person name="Sasaki M."/>
            <person name="Togashi T."/>
            <person name="Oyama M."/>
            <person name="Hata H."/>
            <person name="Watanabe M."/>
            <person name="Komatsu T."/>
            <person name="Mizushima-Sugano J."/>
            <person name="Satoh T."/>
            <person name="Shirai Y."/>
            <person name="Takahashi Y."/>
            <person name="Nakagawa K."/>
            <person name="Okumura K."/>
            <person name="Nagase T."/>
            <person name="Nomura N."/>
            <person name="Kikuchi H."/>
            <person name="Masuho Y."/>
            <person name="Yamashita R."/>
            <person name="Nakai K."/>
            <person name="Yada T."/>
            <person name="Nakamura Y."/>
            <person name="Ohara O."/>
            <person name="Isogai T."/>
            <person name="Sugano S."/>
        </authorList>
    </citation>
    <scope>NUCLEOTIDE SEQUENCE [LARGE SCALE MRNA]</scope>
    <source>
        <tissue>Gastric mucosa</tissue>
    </source>
</reference>
<reference key="3">
    <citation type="journal article" date="2005" name="Nature">
        <title>The DNA sequence of the human X chromosome.</title>
        <authorList>
            <person name="Ross M.T."/>
            <person name="Grafham D.V."/>
            <person name="Coffey A.J."/>
            <person name="Scherer S."/>
            <person name="McLay K."/>
            <person name="Muzny D."/>
            <person name="Platzer M."/>
            <person name="Howell G.R."/>
            <person name="Burrows C."/>
            <person name="Bird C.P."/>
            <person name="Frankish A."/>
            <person name="Lovell F.L."/>
            <person name="Howe K.L."/>
            <person name="Ashurst J.L."/>
            <person name="Fulton R.S."/>
            <person name="Sudbrak R."/>
            <person name="Wen G."/>
            <person name="Jones M.C."/>
            <person name="Hurles M.E."/>
            <person name="Andrews T.D."/>
            <person name="Scott C.E."/>
            <person name="Searle S."/>
            <person name="Ramser J."/>
            <person name="Whittaker A."/>
            <person name="Deadman R."/>
            <person name="Carter N.P."/>
            <person name="Hunt S.E."/>
            <person name="Chen R."/>
            <person name="Cree A."/>
            <person name="Gunaratne P."/>
            <person name="Havlak P."/>
            <person name="Hodgson A."/>
            <person name="Metzker M.L."/>
            <person name="Richards S."/>
            <person name="Scott G."/>
            <person name="Steffen D."/>
            <person name="Sodergren E."/>
            <person name="Wheeler D.A."/>
            <person name="Worley K.C."/>
            <person name="Ainscough R."/>
            <person name="Ambrose K.D."/>
            <person name="Ansari-Lari M.A."/>
            <person name="Aradhya S."/>
            <person name="Ashwell R.I."/>
            <person name="Babbage A.K."/>
            <person name="Bagguley C.L."/>
            <person name="Ballabio A."/>
            <person name="Banerjee R."/>
            <person name="Barker G.E."/>
            <person name="Barlow K.F."/>
            <person name="Barrett I.P."/>
            <person name="Bates K.N."/>
            <person name="Beare D.M."/>
            <person name="Beasley H."/>
            <person name="Beasley O."/>
            <person name="Beck A."/>
            <person name="Bethel G."/>
            <person name="Blechschmidt K."/>
            <person name="Brady N."/>
            <person name="Bray-Allen S."/>
            <person name="Bridgeman A.M."/>
            <person name="Brown A.J."/>
            <person name="Brown M.J."/>
            <person name="Bonnin D."/>
            <person name="Bruford E.A."/>
            <person name="Buhay C."/>
            <person name="Burch P."/>
            <person name="Burford D."/>
            <person name="Burgess J."/>
            <person name="Burrill W."/>
            <person name="Burton J."/>
            <person name="Bye J.M."/>
            <person name="Carder C."/>
            <person name="Carrel L."/>
            <person name="Chako J."/>
            <person name="Chapman J.C."/>
            <person name="Chavez D."/>
            <person name="Chen E."/>
            <person name="Chen G."/>
            <person name="Chen Y."/>
            <person name="Chen Z."/>
            <person name="Chinault C."/>
            <person name="Ciccodicola A."/>
            <person name="Clark S.Y."/>
            <person name="Clarke G."/>
            <person name="Clee C.M."/>
            <person name="Clegg S."/>
            <person name="Clerc-Blankenburg K."/>
            <person name="Clifford K."/>
            <person name="Cobley V."/>
            <person name="Cole C.G."/>
            <person name="Conquer J.S."/>
            <person name="Corby N."/>
            <person name="Connor R.E."/>
            <person name="David R."/>
            <person name="Davies J."/>
            <person name="Davis C."/>
            <person name="Davis J."/>
            <person name="Delgado O."/>
            <person name="Deshazo D."/>
            <person name="Dhami P."/>
            <person name="Ding Y."/>
            <person name="Dinh H."/>
            <person name="Dodsworth S."/>
            <person name="Draper H."/>
            <person name="Dugan-Rocha S."/>
            <person name="Dunham A."/>
            <person name="Dunn M."/>
            <person name="Durbin K.J."/>
            <person name="Dutta I."/>
            <person name="Eades T."/>
            <person name="Ellwood M."/>
            <person name="Emery-Cohen A."/>
            <person name="Errington H."/>
            <person name="Evans K.L."/>
            <person name="Faulkner L."/>
            <person name="Francis F."/>
            <person name="Frankland J."/>
            <person name="Fraser A.E."/>
            <person name="Galgoczy P."/>
            <person name="Gilbert J."/>
            <person name="Gill R."/>
            <person name="Gloeckner G."/>
            <person name="Gregory S.G."/>
            <person name="Gribble S."/>
            <person name="Griffiths C."/>
            <person name="Grocock R."/>
            <person name="Gu Y."/>
            <person name="Gwilliam R."/>
            <person name="Hamilton C."/>
            <person name="Hart E.A."/>
            <person name="Hawes A."/>
            <person name="Heath P.D."/>
            <person name="Heitmann K."/>
            <person name="Hennig S."/>
            <person name="Hernandez J."/>
            <person name="Hinzmann B."/>
            <person name="Ho S."/>
            <person name="Hoffs M."/>
            <person name="Howden P.J."/>
            <person name="Huckle E.J."/>
            <person name="Hume J."/>
            <person name="Hunt P.J."/>
            <person name="Hunt A.R."/>
            <person name="Isherwood J."/>
            <person name="Jacob L."/>
            <person name="Johnson D."/>
            <person name="Jones S."/>
            <person name="de Jong P.J."/>
            <person name="Joseph S.S."/>
            <person name="Keenan S."/>
            <person name="Kelly S."/>
            <person name="Kershaw J.K."/>
            <person name="Khan Z."/>
            <person name="Kioschis P."/>
            <person name="Klages S."/>
            <person name="Knights A.J."/>
            <person name="Kosiura A."/>
            <person name="Kovar-Smith C."/>
            <person name="Laird G.K."/>
            <person name="Langford C."/>
            <person name="Lawlor S."/>
            <person name="Leversha M."/>
            <person name="Lewis L."/>
            <person name="Liu W."/>
            <person name="Lloyd C."/>
            <person name="Lloyd D.M."/>
            <person name="Loulseged H."/>
            <person name="Loveland J.E."/>
            <person name="Lovell J.D."/>
            <person name="Lozado R."/>
            <person name="Lu J."/>
            <person name="Lyne R."/>
            <person name="Ma J."/>
            <person name="Maheshwari M."/>
            <person name="Matthews L.H."/>
            <person name="McDowall J."/>
            <person name="McLaren S."/>
            <person name="McMurray A."/>
            <person name="Meidl P."/>
            <person name="Meitinger T."/>
            <person name="Milne S."/>
            <person name="Miner G."/>
            <person name="Mistry S.L."/>
            <person name="Morgan M."/>
            <person name="Morris S."/>
            <person name="Mueller I."/>
            <person name="Mullikin J.C."/>
            <person name="Nguyen N."/>
            <person name="Nordsiek G."/>
            <person name="Nyakatura G."/>
            <person name="O'dell C.N."/>
            <person name="Okwuonu G."/>
            <person name="Palmer S."/>
            <person name="Pandian R."/>
            <person name="Parker D."/>
            <person name="Parrish J."/>
            <person name="Pasternak S."/>
            <person name="Patel D."/>
            <person name="Pearce A.V."/>
            <person name="Pearson D.M."/>
            <person name="Pelan S.E."/>
            <person name="Perez L."/>
            <person name="Porter K.M."/>
            <person name="Ramsey Y."/>
            <person name="Reichwald K."/>
            <person name="Rhodes S."/>
            <person name="Ridler K.A."/>
            <person name="Schlessinger D."/>
            <person name="Schueler M.G."/>
            <person name="Sehra H.K."/>
            <person name="Shaw-Smith C."/>
            <person name="Shen H."/>
            <person name="Sheridan E.M."/>
            <person name="Shownkeen R."/>
            <person name="Skuce C.D."/>
            <person name="Smith M.L."/>
            <person name="Sotheran E.C."/>
            <person name="Steingruber H.E."/>
            <person name="Steward C.A."/>
            <person name="Storey R."/>
            <person name="Swann R.M."/>
            <person name="Swarbreck D."/>
            <person name="Tabor P.E."/>
            <person name="Taudien S."/>
            <person name="Taylor T."/>
            <person name="Teague B."/>
            <person name="Thomas K."/>
            <person name="Thorpe A."/>
            <person name="Timms K."/>
            <person name="Tracey A."/>
            <person name="Trevanion S."/>
            <person name="Tromans A.C."/>
            <person name="d'Urso M."/>
            <person name="Verduzco D."/>
            <person name="Villasana D."/>
            <person name="Waldron L."/>
            <person name="Wall M."/>
            <person name="Wang Q."/>
            <person name="Warren J."/>
            <person name="Warry G.L."/>
            <person name="Wei X."/>
            <person name="West A."/>
            <person name="Whitehead S.L."/>
            <person name="Whiteley M.N."/>
            <person name="Wilkinson J.E."/>
            <person name="Willey D.L."/>
            <person name="Williams G."/>
            <person name="Williams L."/>
            <person name="Williamson A."/>
            <person name="Williamson H."/>
            <person name="Wilming L."/>
            <person name="Woodmansey R.L."/>
            <person name="Wray P.W."/>
            <person name="Yen J."/>
            <person name="Zhang J."/>
            <person name="Zhou J."/>
            <person name="Zoghbi H."/>
            <person name="Zorilla S."/>
            <person name="Buck D."/>
            <person name="Reinhardt R."/>
            <person name="Poustka A."/>
            <person name="Rosenthal A."/>
            <person name="Lehrach H."/>
            <person name="Meindl A."/>
            <person name="Minx P.J."/>
            <person name="Hillier L.W."/>
            <person name="Willard H.F."/>
            <person name="Wilson R.K."/>
            <person name="Waterston R.H."/>
            <person name="Rice C.M."/>
            <person name="Vaudin M."/>
            <person name="Coulson A."/>
            <person name="Nelson D.L."/>
            <person name="Weinstock G."/>
            <person name="Sulston J.E."/>
            <person name="Durbin R.M."/>
            <person name="Hubbard T."/>
            <person name="Gibbs R.A."/>
            <person name="Beck S."/>
            <person name="Rogers J."/>
            <person name="Bentley D.R."/>
        </authorList>
    </citation>
    <scope>NUCLEOTIDE SEQUENCE [LARGE SCALE GENOMIC DNA]</scope>
</reference>
<reference key="4">
    <citation type="submission" date="2005-09" db="EMBL/GenBank/DDBJ databases">
        <authorList>
            <person name="Mural R.J."/>
            <person name="Istrail S."/>
            <person name="Sutton G.G."/>
            <person name="Florea L."/>
            <person name="Halpern A.L."/>
            <person name="Mobarry C.M."/>
            <person name="Lippert R."/>
            <person name="Walenz B."/>
            <person name="Shatkay H."/>
            <person name="Dew I."/>
            <person name="Miller J.R."/>
            <person name="Flanigan M.J."/>
            <person name="Edwards N.J."/>
            <person name="Bolanos R."/>
            <person name="Fasulo D."/>
            <person name="Halldorsson B.V."/>
            <person name="Hannenhalli S."/>
            <person name="Turner R."/>
            <person name="Yooseph S."/>
            <person name="Lu F."/>
            <person name="Nusskern D.R."/>
            <person name="Shue B.C."/>
            <person name="Zheng X.H."/>
            <person name="Zhong F."/>
            <person name="Delcher A.L."/>
            <person name="Huson D.H."/>
            <person name="Kravitz S.A."/>
            <person name="Mouchard L."/>
            <person name="Reinert K."/>
            <person name="Remington K.A."/>
            <person name="Clark A.G."/>
            <person name="Waterman M.S."/>
            <person name="Eichler E.E."/>
            <person name="Adams M.D."/>
            <person name="Hunkapiller M.W."/>
            <person name="Myers E.W."/>
            <person name="Venter J.C."/>
        </authorList>
    </citation>
    <scope>NUCLEOTIDE SEQUENCE [LARGE SCALE GENOMIC DNA]</scope>
</reference>
<reference key="5">
    <citation type="journal article" date="2004" name="Genome Res.">
        <title>The status, quality, and expansion of the NIH full-length cDNA project: the Mammalian Gene Collection (MGC).</title>
        <authorList>
            <consortium name="The MGC Project Team"/>
        </authorList>
    </citation>
    <scope>NUCLEOTIDE SEQUENCE [LARGE SCALE MRNA]</scope>
    <source>
        <tissue>Eye</tissue>
        <tissue>Skin</tissue>
    </source>
</reference>
<reference key="6">
    <citation type="journal article" date="2006" name="Cell">
        <title>Global, in vivo, and site-specific phosphorylation dynamics in signaling networks.</title>
        <authorList>
            <person name="Olsen J.V."/>
            <person name="Blagoev B."/>
            <person name="Gnad F."/>
            <person name="Macek B."/>
            <person name="Kumar C."/>
            <person name="Mortensen P."/>
            <person name="Mann M."/>
        </authorList>
    </citation>
    <scope>PHOSPHORYLATION [LARGE SCALE ANALYSIS] AT SER-30 AND SER-65</scope>
    <scope>IDENTIFICATION BY MASS SPECTROMETRY [LARGE SCALE ANALYSIS]</scope>
    <source>
        <tissue>Cervix carcinoma</tissue>
    </source>
</reference>
<reference key="7">
    <citation type="journal article" date="2007" name="Science">
        <title>ATM and ATR substrate analysis reveals extensive protein networks responsive to DNA damage.</title>
        <authorList>
            <person name="Matsuoka S."/>
            <person name="Ballif B.A."/>
            <person name="Smogorzewska A."/>
            <person name="McDonald E.R. III"/>
            <person name="Hurov K.E."/>
            <person name="Luo J."/>
            <person name="Bakalarski C.E."/>
            <person name="Zhao Z."/>
            <person name="Solimini N."/>
            <person name="Lerenthal Y."/>
            <person name="Shiloh Y."/>
            <person name="Gygi S.P."/>
            <person name="Elledge S.J."/>
        </authorList>
    </citation>
    <scope>PHOSPHORYLATION [LARGE SCALE ANALYSIS] AT SER-65</scope>
    <scope>IDENTIFICATION BY MASS SPECTROMETRY [LARGE SCALE ANALYSIS]</scope>
    <source>
        <tissue>Embryonic kidney</tissue>
    </source>
</reference>
<reference key="8">
    <citation type="journal article" date="2011" name="Sci. Signal.">
        <title>System-wide temporal characterization of the proteome and phosphoproteome of human embryonic stem cell differentiation.</title>
        <authorList>
            <person name="Rigbolt K.T."/>
            <person name="Prokhorova T.A."/>
            <person name="Akimov V."/>
            <person name="Henningsen J."/>
            <person name="Johansen P.T."/>
            <person name="Kratchmarova I."/>
            <person name="Kassem M."/>
            <person name="Mann M."/>
            <person name="Olsen J.V."/>
            <person name="Blagoev B."/>
        </authorList>
    </citation>
    <scope>PHOSPHORYLATION [LARGE SCALE ANALYSIS] AT SER-30</scope>
    <scope>IDENTIFICATION BY MASS SPECTROMETRY [LARGE SCALE ANALYSIS]</scope>
</reference>
<keyword id="KW-0539">Nucleus</keyword>
<keyword id="KW-0597">Phosphoprotein</keyword>
<keyword id="KW-1267">Proteomics identification</keyword>
<keyword id="KW-1185">Reference proteome</keyword>
<keyword id="KW-0804">Transcription</keyword>
<keyword id="KW-0805">Transcription regulation</keyword>